<dbReference type="EC" id="2.5.1.19" evidence="1"/>
<dbReference type="EMBL" id="CP000036">
    <property type="protein sequence ID" value="ABB66765.1"/>
    <property type="molecule type" value="Genomic_DNA"/>
</dbReference>
<dbReference type="RefSeq" id="WP_000445231.1">
    <property type="nucleotide sequence ID" value="NC_007613.1"/>
</dbReference>
<dbReference type="SMR" id="Q31YU3"/>
<dbReference type="GeneID" id="93776510"/>
<dbReference type="KEGG" id="sbo:SBO_2194"/>
<dbReference type="HOGENOM" id="CLU_024321_0_0_6"/>
<dbReference type="UniPathway" id="UPA00053">
    <property type="reaction ID" value="UER00089"/>
</dbReference>
<dbReference type="Proteomes" id="UP000007067">
    <property type="component" value="Chromosome"/>
</dbReference>
<dbReference type="GO" id="GO:0005737">
    <property type="term" value="C:cytoplasm"/>
    <property type="evidence" value="ECO:0007669"/>
    <property type="project" value="UniProtKB-SubCell"/>
</dbReference>
<dbReference type="GO" id="GO:0003866">
    <property type="term" value="F:3-phosphoshikimate 1-carboxyvinyltransferase activity"/>
    <property type="evidence" value="ECO:0007669"/>
    <property type="project" value="UniProtKB-UniRule"/>
</dbReference>
<dbReference type="GO" id="GO:0008652">
    <property type="term" value="P:amino acid biosynthetic process"/>
    <property type="evidence" value="ECO:0007669"/>
    <property type="project" value="UniProtKB-KW"/>
</dbReference>
<dbReference type="GO" id="GO:0009073">
    <property type="term" value="P:aromatic amino acid family biosynthetic process"/>
    <property type="evidence" value="ECO:0007669"/>
    <property type="project" value="UniProtKB-KW"/>
</dbReference>
<dbReference type="GO" id="GO:0009423">
    <property type="term" value="P:chorismate biosynthetic process"/>
    <property type="evidence" value="ECO:0007669"/>
    <property type="project" value="UniProtKB-UniRule"/>
</dbReference>
<dbReference type="CDD" id="cd01554">
    <property type="entry name" value="EPT-like"/>
    <property type="match status" value="1"/>
</dbReference>
<dbReference type="FunFam" id="3.65.10.10:FF:000003">
    <property type="entry name" value="3-phosphoshikimate 1-carboxyvinyltransferase"/>
    <property type="match status" value="1"/>
</dbReference>
<dbReference type="FunFam" id="3.65.10.10:FF:000004">
    <property type="entry name" value="3-phosphoshikimate 1-carboxyvinyltransferase"/>
    <property type="match status" value="1"/>
</dbReference>
<dbReference type="Gene3D" id="3.65.10.10">
    <property type="entry name" value="Enolpyruvate transferase domain"/>
    <property type="match status" value="2"/>
</dbReference>
<dbReference type="HAMAP" id="MF_00210">
    <property type="entry name" value="EPSP_synth"/>
    <property type="match status" value="1"/>
</dbReference>
<dbReference type="InterPro" id="IPR001986">
    <property type="entry name" value="Enolpyruvate_Tfrase_dom"/>
</dbReference>
<dbReference type="InterPro" id="IPR036968">
    <property type="entry name" value="Enolpyruvate_Tfrase_sf"/>
</dbReference>
<dbReference type="InterPro" id="IPR006264">
    <property type="entry name" value="EPSP_synthase"/>
</dbReference>
<dbReference type="InterPro" id="IPR023193">
    <property type="entry name" value="EPSP_synthase_CS"/>
</dbReference>
<dbReference type="InterPro" id="IPR013792">
    <property type="entry name" value="RNA3'P_cycl/enolpyr_Trfase_a/b"/>
</dbReference>
<dbReference type="NCBIfam" id="TIGR01356">
    <property type="entry name" value="aroA"/>
    <property type="match status" value="1"/>
</dbReference>
<dbReference type="PANTHER" id="PTHR21090">
    <property type="entry name" value="AROM/DEHYDROQUINATE SYNTHASE"/>
    <property type="match status" value="1"/>
</dbReference>
<dbReference type="PANTHER" id="PTHR21090:SF5">
    <property type="entry name" value="PENTAFUNCTIONAL AROM POLYPEPTIDE"/>
    <property type="match status" value="1"/>
</dbReference>
<dbReference type="Pfam" id="PF00275">
    <property type="entry name" value="EPSP_synthase"/>
    <property type="match status" value="1"/>
</dbReference>
<dbReference type="PIRSF" id="PIRSF000505">
    <property type="entry name" value="EPSPS"/>
    <property type="match status" value="1"/>
</dbReference>
<dbReference type="SUPFAM" id="SSF55205">
    <property type="entry name" value="EPT/RTPC-like"/>
    <property type="match status" value="1"/>
</dbReference>
<dbReference type="PROSITE" id="PS00104">
    <property type="entry name" value="EPSP_SYNTHASE_1"/>
    <property type="match status" value="1"/>
</dbReference>
<dbReference type="PROSITE" id="PS00885">
    <property type="entry name" value="EPSP_SYNTHASE_2"/>
    <property type="match status" value="1"/>
</dbReference>
<keyword id="KW-0028">Amino-acid biosynthesis</keyword>
<keyword id="KW-0057">Aromatic amino acid biosynthesis</keyword>
<keyword id="KW-0963">Cytoplasm</keyword>
<keyword id="KW-0808">Transferase</keyword>
<organism>
    <name type="scientific">Shigella boydii serotype 4 (strain Sb227)</name>
    <dbReference type="NCBI Taxonomy" id="300268"/>
    <lineage>
        <taxon>Bacteria</taxon>
        <taxon>Pseudomonadati</taxon>
        <taxon>Pseudomonadota</taxon>
        <taxon>Gammaproteobacteria</taxon>
        <taxon>Enterobacterales</taxon>
        <taxon>Enterobacteriaceae</taxon>
        <taxon>Shigella</taxon>
    </lineage>
</organism>
<protein>
    <recommendedName>
        <fullName evidence="1">3-phosphoshikimate 1-carboxyvinyltransferase</fullName>
        <ecNumber evidence="1">2.5.1.19</ecNumber>
    </recommendedName>
    <alternativeName>
        <fullName evidence="1">5-enolpyruvylshikimate-3-phosphate synthase</fullName>
        <shortName evidence="1">EPSP synthase</shortName>
        <shortName evidence="1">EPSPS</shortName>
    </alternativeName>
</protein>
<reference key="1">
    <citation type="journal article" date="2005" name="Nucleic Acids Res.">
        <title>Genome dynamics and diversity of Shigella species, the etiologic agents of bacillary dysentery.</title>
        <authorList>
            <person name="Yang F."/>
            <person name="Yang J."/>
            <person name="Zhang X."/>
            <person name="Chen L."/>
            <person name="Jiang Y."/>
            <person name="Yan Y."/>
            <person name="Tang X."/>
            <person name="Wang J."/>
            <person name="Xiong Z."/>
            <person name="Dong J."/>
            <person name="Xue Y."/>
            <person name="Zhu Y."/>
            <person name="Xu X."/>
            <person name="Sun L."/>
            <person name="Chen S."/>
            <person name="Nie H."/>
            <person name="Peng J."/>
            <person name="Xu J."/>
            <person name="Wang Y."/>
            <person name="Yuan Z."/>
            <person name="Wen Y."/>
            <person name="Yao Z."/>
            <person name="Shen Y."/>
            <person name="Qiang B."/>
            <person name="Hou Y."/>
            <person name="Yu J."/>
            <person name="Jin Q."/>
        </authorList>
    </citation>
    <scope>NUCLEOTIDE SEQUENCE [LARGE SCALE GENOMIC DNA]</scope>
    <source>
        <strain>Sb227</strain>
    </source>
</reference>
<proteinExistence type="inferred from homology"/>
<sequence>MESLTLQPIARVDGTINLPGSKSVSNRALLLAALAHGKTVLTNLLDSDDVRHMLNALTALGVSYTLSADRTRCEIIGNGGPLHAEGALELFLGNAGTAMRPLAAALCLGSNDIVLTGEPRMKERPIGHLVDALRLGGAKITYLEQENYPPLRLQGGFTGGNVDVDGSVSSQFLTALLMTAPLAPEDTVIRIKGDLVSKPYIDITLNLMKTFGVEIENQHYQQFVVKGGQSYQSPGTYLVEGDASSASYFLAAAAIKGGTVKVTGIGRNSMQGDIRFADVLEKMGATICWGDDYISCTRGELNAIDMDMNHIPDAAMTIATAALFAKGTTTLRNIYNWRVKETDRLFAMATELRKVGAEVEEGHDYIRITPPEKLNFAEIATYNDHRMAMCFSLVALSDTPVTILDPKCTAKTFPDYFEQLARISQAA</sequence>
<accession>Q31YU3</accession>
<gene>
    <name evidence="1" type="primary">aroA</name>
    <name type="ordered locus">SBO_2194</name>
</gene>
<evidence type="ECO:0000255" key="1">
    <source>
        <dbReference type="HAMAP-Rule" id="MF_00210"/>
    </source>
</evidence>
<comment type="function">
    <text evidence="1">Catalyzes the transfer of the enolpyruvyl moiety of phosphoenolpyruvate (PEP) to the 5-hydroxyl of shikimate-3-phosphate (S3P) to produce enolpyruvyl shikimate-3-phosphate and inorganic phosphate.</text>
</comment>
<comment type="catalytic activity">
    <reaction evidence="1">
        <text>3-phosphoshikimate + phosphoenolpyruvate = 5-O-(1-carboxyvinyl)-3-phosphoshikimate + phosphate</text>
        <dbReference type="Rhea" id="RHEA:21256"/>
        <dbReference type="ChEBI" id="CHEBI:43474"/>
        <dbReference type="ChEBI" id="CHEBI:57701"/>
        <dbReference type="ChEBI" id="CHEBI:58702"/>
        <dbReference type="ChEBI" id="CHEBI:145989"/>
        <dbReference type="EC" id="2.5.1.19"/>
    </reaction>
    <physiologicalReaction direction="left-to-right" evidence="1">
        <dbReference type="Rhea" id="RHEA:21257"/>
    </physiologicalReaction>
</comment>
<comment type="pathway">
    <text evidence="1">Metabolic intermediate biosynthesis; chorismate biosynthesis; chorismate from D-erythrose 4-phosphate and phosphoenolpyruvate: step 6/7.</text>
</comment>
<comment type="subunit">
    <text evidence="1">Monomer.</text>
</comment>
<comment type="subcellular location">
    <subcellularLocation>
        <location evidence="1">Cytoplasm</location>
    </subcellularLocation>
</comment>
<comment type="similarity">
    <text evidence="1">Belongs to the EPSP synthase family.</text>
</comment>
<feature type="chain" id="PRO_1000012478" description="3-phosphoshikimate 1-carboxyvinyltransferase">
    <location>
        <begin position="1"/>
        <end position="427"/>
    </location>
</feature>
<feature type="active site" description="Proton acceptor" evidence="1">
    <location>
        <position position="313"/>
    </location>
</feature>
<feature type="binding site" evidence="1">
    <location>
        <position position="22"/>
    </location>
    <ligand>
        <name>3-phosphoshikimate</name>
        <dbReference type="ChEBI" id="CHEBI:145989"/>
    </ligand>
</feature>
<feature type="binding site" evidence="1">
    <location>
        <position position="22"/>
    </location>
    <ligand>
        <name>phosphoenolpyruvate</name>
        <dbReference type="ChEBI" id="CHEBI:58702"/>
    </ligand>
</feature>
<feature type="binding site" evidence="1">
    <location>
        <position position="23"/>
    </location>
    <ligand>
        <name>3-phosphoshikimate</name>
        <dbReference type="ChEBI" id="CHEBI:145989"/>
    </ligand>
</feature>
<feature type="binding site" evidence="1">
    <location>
        <position position="27"/>
    </location>
    <ligand>
        <name>3-phosphoshikimate</name>
        <dbReference type="ChEBI" id="CHEBI:145989"/>
    </ligand>
</feature>
<feature type="binding site" evidence="1">
    <location>
        <position position="96"/>
    </location>
    <ligand>
        <name>phosphoenolpyruvate</name>
        <dbReference type="ChEBI" id="CHEBI:58702"/>
    </ligand>
</feature>
<feature type="binding site" evidence="1">
    <location>
        <position position="124"/>
    </location>
    <ligand>
        <name>phosphoenolpyruvate</name>
        <dbReference type="ChEBI" id="CHEBI:58702"/>
    </ligand>
</feature>
<feature type="binding site" evidence="1">
    <location>
        <position position="169"/>
    </location>
    <ligand>
        <name>3-phosphoshikimate</name>
        <dbReference type="ChEBI" id="CHEBI:145989"/>
    </ligand>
</feature>
<feature type="binding site" evidence="1">
    <location>
        <position position="170"/>
    </location>
    <ligand>
        <name>3-phosphoshikimate</name>
        <dbReference type="ChEBI" id="CHEBI:145989"/>
    </ligand>
</feature>
<feature type="binding site" evidence="1">
    <location>
        <position position="171"/>
    </location>
    <ligand>
        <name>3-phosphoshikimate</name>
        <dbReference type="ChEBI" id="CHEBI:145989"/>
    </ligand>
</feature>
<feature type="binding site" evidence="1">
    <location>
        <position position="171"/>
    </location>
    <ligand>
        <name>phosphoenolpyruvate</name>
        <dbReference type="ChEBI" id="CHEBI:58702"/>
    </ligand>
</feature>
<feature type="binding site" evidence="1">
    <location>
        <position position="197"/>
    </location>
    <ligand>
        <name>3-phosphoshikimate</name>
        <dbReference type="ChEBI" id="CHEBI:145989"/>
    </ligand>
</feature>
<feature type="binding site" evidence="1">
    <location>
        <position position="313"/>
    </location>
    <ligand>
        <name>3-phosphoshikimate</name>
        <dbReference type="ChEBI" id="CHEBI:145989"/>
    </ligand>
</feature>
<feature type="binding site" evidence="1">
    <location>
        <position position="336"/>
    </location>
    <ligand>
        <name>3-phosphoshikimate</name>
        <dbReference type="ChEBI" id="CHEBI:145989"/>
    </ligand>
</feature>
<feature type="binding site" evidence="1">
    <location>
        <position position="340"/>
    </location>
    <ligand>
        <name>3-phosphoshikimate</name>
        <dbReference type="ChEBI" id="CHEBI:145989"/>
    </ligand>
</feature>
<feature type="binding site" evidence="1">
    <location>
        <position position="344"/>
    </location>
    <ligand>
        <name>phosphoenolpyruvate</name>
        <dbReference type="ChEBI" id="CHEBI:58702"/>
    </ligand>
</feature>
<feature type="binding site" evidence="1">
    <location>
        <position position="386"/>
    </location>
    <ligand>
        <name>phosphoenolpyruvate</name>
        <dbReference type="ChEBI" id="CHEBI:58702"/>
    </ligand>
</feature>
<feature type="binding site" evidence="1">
    <location>
        <position position="411"/>
    </location>
    <ligand>
        <name>phosphoenolpyruvate</name>
        <dbReference type="ChEBI" id="CHEBI:58702"/>
    </ligand>
</feature>
<name>AROA_SHIBS</name>